<protein>
    <recommendedName>
        <fullName evidence="4">Protein LONG AFTER FAR-RED 3</fullName>
        <ecNumber evidence="5">3.5.-.-</ecNumber>
    </recommendedName>
</protein>
<gene>
    <name evidence="4" type="primary">LAF3</name>
    <name evidence="6" type="ordered locus">At3g55850</name>
    <name evidence="7" type="ORF">F27K19.30</name>
</gene>
<keyword id="KW-0025">Alternative splicing</keyword>
<keyword id="KW-0963">Cytoplasm</keyword>
<keyword id="KW-0325">Glycoprotein</keyword>
<keyword id="KW-0378">Hydrolase</keyword>
<keyword id="KW-0472">Membrane</keyword>
<keyword id="KW-1185">Reference proteome</keyword>
<keyword id="KW-0812">Transmembrane</keyword>
<keyword id="KW-1133">Transmembrane helix</keyword>
<accession>A0A1I9LN01</accession>
<accession>F4IY42</accession>
<accession>Q7Y048</accession>
<accession>Q7Y049</accession>
<accession>Q93ZE1</accession>
<accession>Q9LY60</accession>
<feature type="chain" id="PRO_0000445026" description="Protein LONG AFTER FAR-RED 3">
    <location>
        <begin position="1"/>
        <end position="583"/>
    </location>
</feature>
<feature type="transmembrane region" description="Helical" evidence="1">
    <location>
        <begin position="7"/>
        <end position="27"/>
    </location>
</feature>
<feature type="glycosylation site" description="N-linked (GlcNAc...) asparagine" evidence="2">
    <location>
        <position position="55"/>
    </location>
</feature>
<feature type="glycosylation site" description="N-linked (GlcNAc...) asparagine" evidence="2">
    <location>
        <position position="374"/>
    </location>
</feature>
<feature type="splice variant" id="VSP_059755" description="In isoform 3.">
    <location>
        <begin position="1"/>
        <end position="187"/>
    </location>
</feature>
<feature type="splice variant" id="VSP_059756" description="In isoform 2.">
    <original>MTGWYEFPVMIGF</original>
    <variation>MNLFVI</variation>
    <location>
        <begin position="1"/>
        <end position="13"/>
    </location>
</feature>
<feature type="sequence conflict" description="In Ref. 1; AAP55749/AAP55750." evidence="5" ref="1">
    <original>L</original>
    <variation>P</variation>
    <location>
        <position position="41"/>
    </location>
</feature>
<proteinExistence type="evidence at transcript level"/>
<sequence>MTGWYEFPVMIGFVSAAVFLLISVAYLPLLNDLYWSTLKSLTPPAGIVADLLVTNGTIFTSDSSLPFADSMAIRNGRILKVGSFATLKGFIGDGTMEVNLEGKIVVPGLIDSHVHLISGGLQMAQVGLRGVSQKDEFCKMVKDAVQNAKEGSWILGGGWNNDFWGGELPSASWIDEISPRNPVWLIRMDGHMALANSLALKIAGVISLTEDPVGGTIMRMPSGEPTGLLIDAAMELVTPWVKEISVDERREALFRASKYALTRGVTTVIDLGRYFPGTTDELSWKDFQDVYLYADSSKKMMIRTCLFFPITTWSRLLDLKLQKGSVLSEWLYLGGVKAFIDGSLGSNSALFYEEYIDTPNNYGLEVMDPEKLSNFTMAADKSGLQVAIHAIGDKANDMILDMYESVAAANGDRDRRFRIEHAQHLAPGSANRFGQLHIVASVQPDHLLDDADSVAKKLGSERAVKESYLFQSLLNGNALLALGSDWPVADINPLHSIRTAVKRIPPKWDHAWIPSERISFTDALIAQTISAARAAFLDHHLGSLSPGKLADFVILSTNSWDEFSKDVSASVLATYVGGKQLYP</sequence>
<evidence type="ECO:0000255" key="1"/>
<evidence type="ECO:0000255" key="2">
    <source>
        <dbReference type="PROSITE-ProRule" id="PRU00498"/>
    </source>
</evidence>
<evidence type="ECO:0000269" key="3">
    <source>
    </source>
</evidence>
<evidence type="ECO:0000303" key="4">
    <source>
    </source>
</evidence>
<evidence type="ECO:0000305" key="5"/>
<evidence type="ECO:0000312" key="6">
    <source>
        <dbReference type="Araport" id="AT3G55850"/>
    </source>
</evidence>
<evidence type="ECO:0000312" key="7">
    <source>
        <dbReference type="EMBL" id="CAB87839.1"/>
    </source>
</evidence>
<reference key="1">
    <citation type="journal article" date="2003" name="Plant Physiol.">
        <title>LAF3, a novel factor required for normal phytochrome A signaling.</title>
        <authorList>
            <person name="Hare P.D."/>
            <person name="Moller S.G."/>
            <person name="Huang L.-F."/>
            <person name="Chua N.-H."/>
        </authorList>
    </citation>
    <scope>NUCLEOTIDE SEQUENCE [MRNA] (ISOFORMS 1 AND 2)</scope>
    <scope>FUNCTION</scope>
    <scope>DISRUPTION PHENOTYPE</scope>
    <scope>INDUCTION BY GERMINATION AND FAR-RED LIGHT</scope>
    <scope>SUBCELLULAR LOCATION</scope>
    <scope>TISSUE SPECIFICITY</scope>
    <source>
        <strain>cv. Landsberg erecta</strain>
    </source>
</reference>
<reference key="2">
    <citation type="journal article" date="2000" name="Nature">
        <title>Sequence and analysis of chromosome 3 of the plant Arabidopsis thaliana.</title>
        <authorList>
            <person name="Salanoubat M."/>
            <person name="Lemcke K."/>
            <person name="Rieger M."/>
            <person name="Ansorge W."/>
            <person name="Unseld M."/>
            <person name="Fartmann B."/>
            <person name="Valle G."/>
            <person name="Bloecker H."/>
            <person name="Perez-Alonso M."/>
            <person name="Obermaier B."/>
            <person name="Delseny M."/>
            <person name="Boutry M."/>
            <person name="Grivell L.A."/>
            <person name="Mache R."/>
            <person name="Puigdomenech P."/>
            <person name="De Simone V."/>
            <person name="Choisne N."/>
            <person name="Artiguenave F."/>
            <person name="Robert C."/>
            <person name="Brottier P."/>
            <person name="Wincker P."/>
            <person name="Cattolico L."/>
            <person name="Weissenbach J."/>
            <person name="Saurin W."/>
            <person name="Quetier F."/>
            <person name="Schaefer M."/>
            <person name="Mueller-Auer S."/>
            <person name="Gabel C."/>
            <person name="Fuchs M."/>
            <person name="Benes V."/>
            <person name="Wurmbach E."/>
            <person name="Drzonek H."/>
            <person name="Erfle H."/>
            <person name="Jordan N."/>
            <person name="Bangert S."/>
            <person name="Wiedelmann R."/>
            <person name="Kranz H."/>
            <person name="Voss H."/>
            <person name="Holland R."/>
            <person name="Brandt P."/>
            <person name="Nyakatura G."/>
            <person name="Vezzi A."/>
            <person name="D'Angelo M."/>
            <person name="Pallavicini A."/>
            <person name="Toppo S."/>
            <person name="Simionati B."/>
            <person name="Conrad A."/>
            <person name="Hornischer K."/>
            <person name="Kauer G."/>
            <person name="Loehnert T.-H."/>
            <person name="Nordsiek G."/>
            <person name="Reichelt J."/>
            <person name="Scharfe M."/>
            <person name="Schoen O."/>
            <person name="Bargues M."/>
            <person name="Terol J."/>
            <person name="Climent J."/>
            <person name="Navarro P."/>
            <person name="Collado C."/>
            <person name="Perez-Perez A."/>
            <person name="Ottenwaelder B."/>
            <person name="Duchemin D."/>
            <person name="Cooke R."/>
            <person name="Laudie M."/>
            <person name="Berger-Llauro C."/>
            <person name="Purnelle B."/>
            <person name="Masuy D."/>
            <person name="de Haan M."/>
            <person name="Maarse A.C."/>
            <person name="Alcaraz J.-P."/>
            <person name="Cottet A."/>
            <person name="Casacuberta E."/>
            <person name="Monfort A."/>
            <person name="Argiriou A."/>
            <person name="Flores M."/>
            <person name="Liguori R."/>
            <person name="Vitale D."/>
            <person name="Mannhaupt G."/>
            <person name="Haase D."/>
            <person name="Schoof H."/>
            <person name="Rudd S."/>
            <person name="Zaccaria P."/>
            <person name="Mewes H.-W."/>
            <person name="Mayer K.F.X."/>
            <person name="Kaul S."/>
            <person name="Town C.D."/>
            <person name="Koo H.L."/>
            <person name="Tallon L.J."/>
            <person name="Jenkins J."/>
            <person name="Rooney T."/>
            <person name="Rizzo M."/>
            <person name="Walts A."/>
            <person name="Utterback T."/>
            <person name="Fujii C.Y."/>
            <person name="Shea T.P."/>
            <person name="Creasy T.H."/>
            <person name="Haas B."/>
            <person name="Maiti R."/>
            <person name="Wu D."/>
            <person name="Peterson J."/>
            <person name="Van Aken S."/>
            <person name="Pai G."/>
            <person name="Militscher J."/>
            <person name="Sellers P."/>
            <person name="Gill J.E."/>
            <person name="Feldblyum T.V."/>
            <person name="Preuss D."/>
            <person name="Lin X."/>
            <person name="Nierman W.C."/>
            <person name="Salzberg S.L."/>
            <person name="White O."/>
            <person name="Venter J.C."/>
            <person name="Fraser C.M."/>
            <person name="Kaneko T."/>
            <person name="Nakamura Y."/>
            <person name="Sato S."/>
            <person name="Kato T."/>
            <person name="Asamizu E."/>
            <person name="Sasamoto S."/>
            <person name="Kimura T."/>
            <person name="Idesawa K."/>
            <person name="Kawashima K."/>
            <person name="Kishida Y."/>
            <person name="Kiyokawa C."/>
            <person name="Kohara M."/>
            <person name="Matsumoto M."/>
            <person name="Matsuno A."/>
            <person name="Muraki A."/>
            <person name="Nakayama S."/>
            <person name="Nakazaki N."/>
            <person name="Shinpo S."/>
            <person name="Takeuchi C."/>
            <person name="Wada T."/>
            <person name="Watanabe A."/>
            <person name="Yamada M."/>
            <person name="Yasuda M."/>
            <person name="Tabata S."/>
        </authorList>
    </citation>
    <scope>NUCLEOTIDE SEQUENCE [LARGE SCALE GENOMIC DNA]</scope>
    <source>
        <strain>cv. Columbia</strain>
    </source>
</reference>
<reference key="3">
    <citation type="journal article" date="2017" name="Plant J.">
        <title>Araport11: a complete reannotation of the Arabidopsis thaliana reference genome.</title>
        <authorList>
            <person name="Cheng C.Y."/>
            <person name="Krishnakumar V."/>
            <person name="Chan A.P."/>
            <person name="Thibaud-Nissen F."/>
            <person name="Schobel S."/>
            <person name="Town C.D."/>
        </authorList>
    </citation>
    <scope>GENOME REANNOTATION</scope>
    <source>
        <strain>cv. Columbia</strain>
    </source>
</reference>
<reference key="4">
    <citation type="journal article" date="2003" name="Science">
        <title>Empirical analysis of transcriptional activity in the Arabidopsis genome.</title>
        <authorList>
            <person name="Yamada K."/>
            <person name="Lim J."/>
            <person name="Dale J.M."/>
            <person name="Chen H."/>
            <person name="Shinn P."/>
            <person name="Palm C.J."/>
            <person name="Southwick A.M."/>
            <person name="Wu H.C."/>
            <person name="Kim C.J."/>
            <person name="Nguyen M."/>
            <person name="Pham P.K."/>
            <person name="Cheuk R.F."/>
            <person name="Karlin-Newmann G."/>
            <person name="Liu S.X."/>
            <person name="Lam B."/>
            <person name="Sakano H."/>
            <person name="Wu T."/>
            <person name="Yu G."/>
            <person name="Miranda M."/>
            <person name="Quach H.L."/>
            <person name="Tripp M."/>
            <person name="Chang C.H."/>
            <person name="Lee J.M."/>
            <person name="Toriumi M.J."/>
            <person name="Chan M.M."/>
            <person name="Tang C.C."/>
            <person name="Onodera C.S."/>
            <person name="Deng J.M."/>
            <person name="Akiyama K."/>
            <person name="Ansari Y."/>
            <person name="Arakawa T."/>
            <person name="Banh J."/>
            <person name="Banno F."/>
            <person name="Bowser L."/>
            <person name="Brooks S.Y."/>
            <person name="Carninci P."/>
            <person name="Chao Q."/>
            <person name="Choy N."/>
            <person name="Enju A."/>
            <person name="Goldsmith A.D."/>
            <person name="Gurjal M."/>
            <person name="Hansen N.F."/>
            <person name="Hayashizaki Y."/>
            <person name="Johnson-Hopson C."/>
            <person name="Hsuan V.W."/>
            <person name="Iida K."/>
            <person name="Karnes M."/>
            <person name="Khan S."/>
            <person name="Koesema E."/>
            <person name="Ishida J."/>
            <person name="Jiang P.X."/>
            <person name="Jones T."/>
            <person name="Kawai J."/>
            <person name="Kamiya A."/>
            <person name="Meyers C."/>
            <person name="Nakajima M."/>
            <person name="Narusaka M."/>
            <person name="Seki M."/>
            <person name="Sakurai T."/>
            <person name="Satou M."/>
            <person name="Tamse R."/>
            <person name="Vaysberg M."/>
            <person name="Wallender E.K."/>
            <person name="Wong C."/>
            <person name="Yamamura Y."/>
            <person name="Yuan S."/>
            <person name="Shinozaki K."/>
            <person name="Davis R.W."/>
            <person name="Theologis A."/>
            <person name="Ecker J.R."/>
        </authorList>
    </citation>
    <scope>NUCLEOTIDE SEQUENCE [LARGE SCALE MRNA] (ISOFORM 3)</scope>
    <source>
        <strain>cv. Columbia</strain>
    </source>
</reference>
<dbReference type="EC" id="3.5.-.-" evidence="5"/>
<dbReference type="EMBL" id="AY295343">
    <property type="protein sequence ID" value="AAP55749.1"/>
    <property type="molecule type" value="mRNA"/>
</dbReference>
<dbReference type="EMBL" id="AY295344">
    <property type="protein sequence ID" value="AAP55750.1"/>
    <property type="molecule type" value="mRNA"/>
</dbReference>
<dbReference type="EMBL" id="AL163832">
    <property type="protein sequence ID" value="CAB87839.1"/>
    <property type="status" value="ALT_SEQ"/>
    <property type="molecule type" value="Genomic_DNA"/>
</dbReference>
<dbReference type="EMBL" id="CP002686">
    <property type="protein sequence ID" value="AEE79448.1"/>
    <property type="molecule type" value="Genomic_DNA"/>
</dbReference>
<dbReference type="EMBL" id="CP002686">
    <property type="protein sequence ID" value="ANM63958.1"/>
    <property type="molecule type" value="Genomic_DNA"/>
</dbReference>
<dbReference type="EMBL" id="CP002686">
    <property type="protein sequence ID" value="ANM63959.1"/>
    <property type="molecule type" value="Genomic_DNA"/>
</dbReference>
<dbReference type="EMBL" id="AY057597">
    <property type="protein sequence ID" value="AAL14392.1"/>
    <property type="molecule type" value="mRNA"/>
</dbReference>
<dbReference type="EMBL" id="BT000585">
    <property type="protein sequence ID" value="AAN18154.1"/>
    <property type="molecule type" value="mRNA"/>
</dbReference>
<dbReference type="PIR" id="T49197">
    <property type="entry name" value="T49197"/>
</dbReference>
<dbReference type="RefSeq" id="NP_001326017.1">
    <molecule id="A0A1I9LN01-2"/>
    <property type="nucleotide sequence ID" value="NM_001339751.1"/>
</dbReference>
<dbReference type="RefSeq" id="NP_567027.2">
    <molecule id="A0A1I9LN01-2"/>
    <property type="nucleotide sequence ID" value="NM_115443.4"/>
</dbReference>
<dbReference type="RefSeq" id="NP_974445.2">
    <molecule id="A0A1I9LN01-1"/>
    <property type="nucleotide sequence ID" value="NM_202716.3"/>
</dbReference>
<dbReference type="SMR" id="A0A1I9LN01"/>
<dbReference type="FunCoup" id="A0A1I9LN01">
    <property type="interactions" value="177"/>
</dbReference>
<dbReference type="STRING" id="3702.A0A1I9LN01"/>
<dbReference type="GlyCosmos" id="A0A1I9LN01">
    <property type="glycosylation" value="2 sites, No reported glycans"/>
</dbReference>
<dbReference type="GlyGen" id="A0A1I9LN01">
    <property type="glycosylation" value="2 sites"/>
</dbReference>
<dbReference type="PaxDb" id="3702-AT3G55850.2"/>
<dbReference type="ProteomicsDB" id="250750">
    <molecule id="A0A1I9LN01-1"/>
</dbReference>
<dbReference type="EnsemblPlants" id="AT3G55850.1">
    <molecule id="A0A1I9LN01-2"/>
    <property type="protein sequence ID" value="AT3G55850.1"/>
    <property type="gene ID" value="AT3G55850"/>
</dbReference>
<dbReference type="EnsemblPlants" id="AT3G55850.5">
    <molecule id="A0A1I9LN01-1"/>
    <property type="protein sequence ID" value="AT3G55850.5"/>
    <property type="gene ID" value="AT3G55850"/>
</dbReference>
<dbReference type="EnsemblPlants" id="AT3G55850.6">
    <molecule id="A0A1I9LN01-2"/>
    <property type="protein sequence ID" value="AT3G55850.6"/>
    <property type="gene ID" value="AT3G55850"/>
</dbReference>
<dbReference type="GeneID" id="824751"/>
<dbReference type="Gramene" id="AT3G55850.1">
    <molecule id="A0A1I9LN01-2"/>
    <property type="protein sequence ID" value="AT3G55850.1"/>
    <property type="gene ID" value="AT3G55850"/>
</dbReference>
<dbReference type="Gramene" id="AT3G55850.5">
    <molecule id="A0A1I9LN01-1"/>
    <property type="protein sequence ID" value="AT3G55850.5"/>
    <property type="gene ID" value="AT3G55850"/>
</dbReference>
<dbReference type="Gramene" id="AT3G55850.6">
    <molecule id="A0A1I9LN01-2"/>
    <property type="protein sequence ID" value="AT3G55850.6"/>
    <property type="gene ID" value="AT3G55850"/>
</dbReference>
<dbReference type="KEGG" id="ath:AT3G55850"/>
<dbReference type="Araport" id="AT3G55850"/>
<dbReference type="TAIR" id="AT3G55850">
    <property type="gene designation" value="LAF3"/>
</dbReference>
<dbReference type="eggNOG" id="ENOG502QSHE">
    <property type="taxonomic scope" value="Eukaryota"/>
</dbReference>
<dbReference type="HOGENOM" id="CLU_009942_6_0_1"/>
<dbReference type="InParanoid" id="A0A1I9LN01"/>
<dbReference type="OMA" id="VAWVGSE"/>
<dbReference type="PRO" id="PR:A0A1I9LN01"/>
<dbReference type="Proteomes" id="UP000006548">
    <property type="component" value="Chromosome 3"/>
</dbReference>
<dbReference type="ExpressionAtlas" id="A0A1I9LN01">
    <property type="expression patterns" value="baseline and differential"/>
</dbReference>
<dbReference type="GO" id="GO:0016020">
    <property type="term" value="C:membrane"/>
    <property type="evidence" value="ECO:0007669"/>
    <property type="project" value="UniProtKB-SubCell"/>
</dbReference>
<dbReference type="GO" id="GO:0048471">
    <property type="term" value="C:perinuclear region of cytoplasm"/>
    <property type="evidence" value="ECO:0000314"/>
    <property type="project" value="UniProtKB"/>
</dbReference>
<dbReference type="GO" id="GO:0016810">
    <property type="term" value="F:hydrolase activity, acting on carbon-nitrogen (but not peptide) bonds"/>
    <property type="evidence" value="ECO:0007669"/>
    <property type="project" value="InterPro"/>
</dbReference>
<dbReference type="GO" id="GO:0009704">
    <property type="term" value="P:de-etiolation"/>
    <property type="evidence" value="ECO:0000270"/>
    <property type="project" value="UniProtKB"/>
</dbReference>
<dbReference type="GO" id="GO:0010218">
    <property type="term" value="P:response to far red light"/>
    <property type="evidence" value="ECO:0000315"/>
    <property type="project" value="UniProtKB"/>
</dbReference>
<dbReference type="GO" id="GO:0009845">
    <property type="term" value="P:seed germination"/>
    <property type="evidence" value="ECO:0000270"/>
    <property type="project" value="UniProtKB"/>
</dbReference>
<dbReference type="CDD" id="cd01300">
    <property type="entry name" value="YtcJ_like"/>
    <property type="match status" value="1"/>
</dbReference>
<dbReference type="FunFam" id="3.10.310.70:FF:000002">
    <property type="entry name" value="LAF3/LAF3 ISF1/LAF3 ISF2"/>
    <property type="match status" value="1"/>
</dbReference>
<dbReference type="Gene3D" id="3.10.310.70">
    <property type="match status" value="1"/>
</dbReference>
<dbReference type="Gene3D" id="3.20.20.140">
    <property type="entry name" value="Metal-dependent hydrolases"/>
    <property type="match status" value="1"/>
</dbReference>
<dbReference type="Gene3D" id="2.30.40.10">
    <property type="entry name" value="Urease, subunit C, domain 1"/>
    <property type="match status" value="1"/>
</dbReference>
<dbReference type="InterPro" id="IPR013108">
    <property type="entry name" value="Amidohydro_3"/>
</dbReference>
<dbReference type="InterPro" id="IPR011059">
    <property type="entry name" value="Metal-dep_hydrolase_composite"/>
</dbReference>
<dbReference type="InterPro" id="IPR032466">
    <property type="entry name" value="Metal_Hydrolase"/>
</dbReference>
<dbReference type="InterPro" id="IPR033932">
    <property type="entry name" value="YtcJ-like"/>
</dbReference>
<dbReference type="PANTHER" id="PTHR22642">
    <property type="entry name" value="IMIDAZOLONEPROPIONASE"/>
    <property type="match status" value="1"/>
</dbReference>
<dbReference type="PANTHER" id="PTHR22642:SF2">
    <property type="entry name" value="PROTEIN LONG AFTER FAR-RED 3"/>
    <property type="match status" value="1"/>
</dbReference>
<dbReference type="Pfam" id="PF07969">
    <property type="entry name" value="Amidohydro_3"/>
    <property type="match status" value="1"/>
</dbReference>
<dbReference type="SUPFAM" id="SSF51338">
    <property type="entry name" value="Composite domain of metallo-dependent hydrolases"/>
    <property type="match status" value="1"/>
</dbReference>
<dbReference type="SUPFAM" id="SSF51556">
    <property type="entry name" value="Metallo-dependent hydrolases"/>
    <property type="match status" value="1"/>
</dbReference>
<organism>
    <name type="scientific">Arabidopsis thaliana</name>
    <name type="common">Mouse-ear cress</name>
    <dbReference type="NCBI Taxonomy" id="3702"/>
    <lineage>
        <taxon>Eukaryota</taxon>
        <taxon>Viridiplantae</taxon>
        <taxon>Streptophyta</taxon>
        <taxon>Embryophyta</taxon>
        <taxon>Tracheophyta</taxon>
        <taxon>Spermatophyta</taxon>
        <taxon>Magnoliopsida</taxon>
        <taxon>eudicotyledons</taxon>
        <taxon>Gunneridae</taxon>
        <taxon>Pentapetalae</taxon>
        <taxon>rosids</taxon>
        <taxon>malvids</taxon>
        <taxon>Brassicales</taxon>
        <taxon>Brassicaceae</taxon>
        <taxon>Camelineae</taxon>
        <taxon>Arabidopsis</taxon>
    </lineage>
</organism>
<comment type="function">
    <text evidence="3">Required for phyA-controlled responses to continuous far-red light (FRc) conditions, including the inhibition of hypocotyl elongation and the regulation of XTH15/XTR7 expression.</text>
</comment>
<comment type="subcellular location">
    <subcellularLocation>
        <location evidence="1">Membrane</location>
        <topology evidence="1">Single-pass membrane protein</topology>
    </subcellularLocation>
    <subcellularLocation>
        <location evidence="3">Cytoplasm</location>
        <location evidence="3">Perinuclear region</location>
    </subcellularLocation>
</comment>
<comment type="alternative products">
    <event type="alternative splicing"/>
    <isoform>
        <id>A0A1I9LN01-1</id>
        <name>1</name>
        <name evidence="4">LAF3(ISF1)</name>
        <sequence type="displayed"/>
    </isoform>
    <isoform>
        <id>A0A1I9LN01-2</id>
        <name>2</name>
        <name evidence="4">LAF3(ISF2)</name>
        <sequence type="described" ref="VSP_059756"/>
    </isoform>
    <isoform>
        <id>A0A1I9LN01-3</id>
        <name>3</name>
        <sequence type="described" ref="VSP_059755"/>
    </isoform>
</comment>
<comment type="tissue specificity">
    <text evidence="3">Expressed at low level in seedlings, roots, leaves, stems, flowers, and siliques.</text>
</comment>
<comment type="induction">
    <text evidence="3">Induced during germination. Accumulates slightly in seedlings upon de-etiolation; triggered slowly after irradiation with far-red light (FRc).</text>
</comment>
<comment type="disruption phenotype">
    <text evidence="3">Reduced inhibition of hypocotyl elongation in continuous far-red light (FRc), associated with a strongly attenuated disappearance of XTH15/XTR7 transcripts.</text>
</comment>
<comment type="similarity">
    <text evidence="5">Belongs to the metallo-dependent hydrolases superfamily.</text>
</comment>
<comment type="sequence caution" evidence="5">
    <conflict type="erroneous gene model prediction">
        <sequence resource="EMBL-CDS" id="CAB87839"/>
    </conflict>
</comment>
<name>LAF3_ARATH</name>